<protein>
    <recommendedName>
        <fullName evidence="1">Small ribosomal subunit protein uS8</fullName>
    </recommendedName>
    <alternativeName>
        <fullName evidence="2">30S ribosomal protein S8</fullName>
    </alternativeName>
</protein>
<dbReference type="EMBL" id="AF404829">
    <property type="protein sequence ID" value="AAK92537.1"/>
    <property type="molecule type" value="Genomic_DNA"/>
</dbReference>
<dbReference type="SMR" id="Q977U9"/>
<dbReference type="OrthoDB" id="5670at2157"/>
<dbReference type="GO" id="GO:1990904">
    <property type="term" value="C:ribonucleoprotein complex"/>
    <property type="evidence" value="ECO:0007669"/>
    <property type="project" value="UniProtKB-KW"/>
</dbReference>
<dbReference type="GO" id="GO:0005840">
    <property type="term" value="C:ribosome"/>
    <property type="evidence" value="ECO:0007669"/>
    <property type="project" value="UniProtKB-KW"/>
</dbReference>
<dbReference type="GO" id="GO:0019843">
    <property type="term" value="F:rRNA binding"/>
    <property type="evidence" value="ECO:0007669"/>
    <property type="project" value="UniProtKB-UniRule"/>
</dbReference>
<dbReference type="GO" id="GO:0003735">
    <property type="term" value="F:structural constituent of ribosome"/>
    <property type="evidence" value="ECO:0007669"/>
    <property type="project" value="InterPro"/>
</dbReference>
<dbReference type="GO" id="GO:0006412">
    <property type="term" value="P:translation"/>
    <property type="evidence" value="ECO:0007669"/>
    <property type="project" value="UniProtKB-UniRule"/>
</dbReference>
<dbReference type="FunFam" id="3.30.1370.30:FF:000001">
    <property type="entry name" value="40S ribosomal protein S15a"/>
    <property type="match status" value="1"/>
</dbReference>
<dbReference type="Gene3D" id="3.30.1370.30">
    <property type="match status" value="1"/>
</dbReference>
<dbReference type="Gene3D" id="3.30.1490.10">
    <property type="match status" value="1"/>
</dbReference>
<dbReference type="HAMAP" id="MF_01302_A">
    <property type="entry name" value="Ribosomal_uS8_A"/>
    <property type="match status" value="1"/>
</dbReference>
<dbReference type="InterPro" id="IPR000630">
    <property type="entry name" value="Ribosomal_uS8"/>
</dbReference>
<dbReference type="InterPro" id="IPR047863">
    <property type="entry name" value="Ribosomal_uS8_CS"/>
</dbReference>
<dbReference type="InterPro" id="IPR035987">
    <property type="entry name" value="Ribosomal_uS8_sf"/>
</dbReference>
<dbReference type="NCBIfam" id="NF003115">
    <property type="entry name" value="PRK04034.1"/>
    <property type="match status" value="1"/>
</dbReference>
<dbReference type="PANTHER" id="PTHR11758">
    <property type="entry name" value="40S RIBOSOMAL PROTEIN S15A"/>
    <property type="match status" value="1"/>
</dbReference>
<dbReference type="Pfam" id="PF00410">
    <property type="entry name" value="Ribosomal_S8"/>
    <property type="match status" value="1"/>
</dbReference>
<dbReference type="SUPFAM" id="SSF56047">
    <property type="entry name" value="Ribosomal protein S8"/>
    <property type="match status" value="1"/>
</dbReference>
<dbReference type="PROSITE" id="PS00053">
    <property type="entry name" value="RIBOSOMAL_S8"/>
    <property type="match status" value="1"/>
</dbReference>
<keyword id="KW-0687">Ribonucleoprotein</keyword>
<keyword id="KW-0689">Ribosomal protein</keyword>
<keyword id="KW-0694">RNA-binding</keyword>
<keyword id="KW-0699">rRNA-binding</keyword>
<proteinExistence type="inferred from homology"/>
<gene>
    <name evidence="1" type="primary">rps8</name>
</gene>
<accession>Q977U9</accession>
<evidence type="ECO:0000255" key="1">
    <source>
        <dbReference type="HAMAP-Rule" id="MF_01302"/>
    </source>
</evidence>
<evidence type="ECO:0000305" key="2"/>
<organism>
    <name type="scientific">Methanococcus voltae</name>
    <dbReference type="NCBI Taxonomy" id="2188"/>
    <lineage>
        <taxon>Archaea</taxon>
        <taxon>Methanobacteriati</taxon>
        <taxon>Methanobacteriota</taxon>
        <taxon>Methanomada group</taxon>
        <taxon>Methanococci</taxon>
        <taxon>Methanococcales</taxon>
        <taxon>Methanococcaceae</taxon>
        <taxon>Methanococcus</taxon>
    </lineage>
</organism>
<reference key="1">
    <citation type="submission" date="2001-08" db="EMBL/GenBank/DDBJ databases">
        <title>Sequence of the gene of ribosomal protein S8 from Methanococcus voltae.</title>
        <authorList>
            <person name="Lung B."/>
            <person name="Piendl W.A."/>
        </authorList>
    </citation>
    <scope>NUCLEOTIDE SEQUENCE [GENOMIC DNA]</scope>
</reference>
<feature type="chain" id="PRO_0000126546" description="Small ribosomal subunit protein uS8">
    <location>
        <begin position="1"/>
        <end position="130"/>
    </location>
</feature>
<sequence>MSLMDPLANALNHISNCENVGKNTAYLKPASKLIGRVLKVMQDQGYIGNFEYIEDGKAGVYKVTLIGQINKCGAVKPRFAVKNQEFEKFEKRYLPAKGFGLLIVSTPKGLMTHDEAKDSGIGGRLISYIY</sequence>
<name>RS8_METVO</name>
<comment type="function">
    <text evidence="1">One of the primary rRNA binding proteins, it binds directly to 16S rRNA central domain where it helps coordinate assembly of the platform of the 30S subunit.</text>
</comment>
<comment type="subunit">
    <text evidence="1">Part of the 30S ribosomal subunit.</text>
</comment>
<comment type="similarity">
    <text evidence="1">Belongs to the universal ribosomal protein uS8 family.</text>
</comment>